<feature type="initiator methionine" description="Removed" evidence="1">
    <location>
        <position position="1"/>
    </location>
</feature>
<feature type="chain" id="PRO_0000460069" description="Small ribosomal subunit protein eS19">
    <location>
        <begin position="2"/>
        <end position="145"/>
    </location>
</feature>
<feature type="modified residue" description="N6-acetyllysine" evidence="1">
    <location>
        <position position="23"/>
    </location>
</feature>
<feature type="modified residue" description="Omega-N-methylarginine" evidence="1">
    <location>
        <position position="67"/>
    </location>
</feature>
<feature type="modified residue" description="N6-acetyllysine" evidence="1">
    <location>
        <position position="111"/>
    </location>
</feature>
<feature type="modified residue" description="N6-acetyllysine" evidence="2">
    <location>
        <position position="115"/>
    </location>
</feature>
<feature type="modified residue" description="N6-succinyllysine" evidence="2">
    <location>
        <position position="143"/>
    </location>
</feature>
<feature type="helix" evidence="41">
    <location>
        <begin position="6"/>
        <end position="8"/>
    </location>
</feature>
<feature type="helix" evidence="40">
    <location>
        <begin position="14"/>
        <end position="20"/>
    </location>
</feature>
<feature type="turn" evidence="40">
    <location>
        <begin position="21"/>
        <end position="25"/>
    </location>
</feature>
<feature type="helix" evidence="40">
    <location>
        <begin position="32"/>
        <end position="35"/>
    </location>
</feature>
<feature type="strand" evidence="38">
    <location>
        <begin position="39"/>
        <end position="42"/>
    </location>
</feature>
<feature type="strand" evidence="41">
    <location>
        <begin position="48"/>
        <end position="50"/>
    </location>
</feature>
<feature type="helix" evidence="40">
    <location>
        <begin position="52"/>
        <end position="66"/>
    </location>
</feature>
<feature type="helix" evidence="40">
    <location>
        <begin position="72"/>
        <end position="78"/>
    </location>
</feature>
<feature type="strand" evidence="39">
    <location>
        <begin position="81"/>
        <end position="83"/>
    </location>
</feature>
<feature type="strand" evidence="40">
    <location>
        <begin position="86"/>
        <end position="88"/>
    </location>
</feature>
<feature type="strand" evidence="39">
    <location>
        <begin position="91"/>
        <end position="93"/>
    </location>
</feature>
<feature type="helix" evidence="40">
    <location>
        <begin position="97"/>
        <end position="104"/>
    </location>
</feature>
<feature type="helix" evidence="40">
    <location>
        <begin position="106"/>
        <end position="109"/>
    </location>
</feature>
<feature type="strand" evidence="40">
    <location>
        <begin position="112"/>
        <end position="115"/>
    </location>
</feature>
<feature type="strand" evidence="40">
    <location>
        <begin position="119"/>
        <end position="123"/>
    </location>
</feature>
<feature type="helix" evidence="40">
    <location>
        <begin position="129"/>
        <end position="138"/>
    </location>
</feature>
<feature type="turn" evidence="40">
    <location>
        <begin position="139"/>
        <end position="141"/>
    </location>
</feature>
<gene>
    <name type="primary">RPS19</name>
</gene>
<reference key="1">
    <citation type="journal article" date="2011" name="Nature">
        <title>A high-resolution map of human evolutionary constraint using 29 mammals.</title>
        <authorList>
            <person name="Lindblad-Toh K."/>
            <person name="Garber M."/>
            <person name="Zuk O."/>
            <person name="Lin M.F."/>
            <person name="Parker B.J."/>
            <person name="Washietl S."/>
            <person name="Kheradpour P."/>
            <person name="Ernst J."/>
            <person name="Jordan G."/>
            <person name="Mauceli E."/>
            <person name="Ward L.D."/>
            <person name="Lowe C.B."/>
            <person name="Holloway A.K."/>
            <person name="Clamp M."/>
            <person name="Gnerre S."/>
            <person name="Alfoldi J."/>
            <person name="Beal K."/>
            <person name="Chang J."/>
            <person name="Clawson H."/>
            <person name="Cuff J."/>
            <person name="Di Palma F."/>
            <person name="Fitzgerald S."/>
            <person name="Flicek P."/>
            <person name="Guttman M."/>
            <person name="Hubisz M.J."/>
            <person name="Jaffe D.B."/>
            <person name="Jungreis I."/>
            <person name="Kent W.J."/>
            <person name="Kostka D."/>
            <person name="Lara M."/>
            <person name="Martins A.L."/>
            <person name="Massingham T."/>
            <person name="Moltke I."/>
            <person name="Raney B.J."/>
            <person name="Rasmussen M.D."/>
            <person name="Robinson J."/>
            <person name="Stark A."/>
            <person name="Vilella A.J."/>
            <person name="Wen J."/>
            <person name="Xie X."/>
            <person name="Zody M.C."/>
            <person name="Baldwin J."/>
            <person name="Bloom T."/>
            <person name="Chin C.W."/>
            <person name="Heiman D."/>
            <person name="Nicol R."/>
            <person name="Nusbaum C."/>
            <person name="Young S."/>
            <person name="Wilkinson J."/>
            <person name="Worley K.C."/>
            <person name="Kovar C.L."/>
            <person name="Muzny D.M."/>
            <person name="Gibbs R.A."/>
            <person name="Cree A."/>
            <person name="Dihn H.H."/>
            <person name="Fowler G."/>
            <person name="Jhangiani S."/>
            <person name="Joshi V."/>
            <person name="Lee S."/>
            <person name="Lewis L.R."/>
            <person name="Nazareth L.V."/>
            <person name="Okwuonu G."/>
            <person name="Santibanez J."/>
            <person name="Warren W.C."/>
            <person name="Mardis E.R."/>
            <person name="Weinstock G.M."/>
            <person name="Wilson R.K."/>
            <person name="Delehaunty K."/>
            <person name="Dooling D."/>
            <person name="Fronik C."/>
            <person name="Fulton L."/>
            <person name="Fulton B."/>
            <person name="Graves T."/>
            <person name="Minx P."/>
            <person name="Sodergren E."/>
            <person name="Birney E."/>
            <person name="Margulies E.H."/>
            <person name="Herrero J."/>
            <person name="Green E.D."/>
            <person name="Haussler D."/>
            <person name="Siepel A."/>
            <person name="Goldman N."/>
            <person name="Pollard K.S."/>
            <person name="Pedersen J.S."/>
            <person name="Lander E.S."/>
            <person name="Kellis M."/>
        </authorList>
    </citation>
    <scope>NUCLEOTIDE SEQUENCE [LARGE SCALE GENOMIC DNA]</scope>
    <source>
        <strain>Thorbecke</strain>
    </source>
</reference>
<reference evidence="20 21" key="2">
    <citation type="journal article" date="2013" name="Nature">
        <title>The initiation of mammalian protein synthesis and mRNA scanning mechanism.</title>
        <authorList>
            <person name="Lomakin I.B."/>
            <person name="Steitz T.A."/>
        </authorList>
    </citation>
    <scope>X-RAY CRYSTALLOGRAPHY (7.01 ANGSTROMS) OF 40S RIBOSOME</scope>
    <scope>FUNCTION</scope>
    <scope>SUBUNIT</scope>
    <scope>SUBCELLULAR LOCATION</scope>
</reference>
<reference evidence="18 19" key="3">
    <citation type="journal article" date="2015" name="Mol. Cell">
        <title>Cryo-EM of ribosomal 80S complexes with termination factors reveals the translocated cricket paralysis virus IRES.</title>
        <authorList>
            <person name="Muhs M."/>
            <person name="Hilal T."/>
            <person name="Mielke T."/>
            <person name="Skabkin M.A."/>
            <person name="Sanbonmatsu K.Y."/>
            <person name="Pestova T.V."/>
            <person name="Spahn C.M."/>
        </authorList>
    </citation>
    <scope>STRUCTURE BY ELECTRON MICROSCOPY (9.00 ANGSTROMS) OF RIBOSOME</scope>
    <scope>FUNCTION</scope>
    <scope>SUBUNIT</scope>
    <scope>SUBCELLULAR LOCATION</scope>
</reference>
<reference evidence="16 17" key="4">
    <citation type="journal article" date="2015" name="Nature">
        <title>Structural basis for stop codon recognition in eukaryotes.</title>
        <authorList>
            <person name="Brown A."/>
            <person name="Shao S."/>
            <person name="Murray J."/>
            <person name="Hegde R.S."/>
            <person name="Ramakrishnan V."/>
        </authorList>
    </citation>
    <scope>STRUCTURE BY ELECTRON MICROSCOPY (3.45 ANGSTROMS) OF 4-144 OF RIBOSOME</scope>
    <scope>FUNCTION</scope>
    <scope>SUBCELLULAR LOCATION</scope>
    <scope>SUBUNIT</scope>
</reference>
<reference evidence="22 23" key="5">
    <citation type="journal article" date="2016" name="Cell">
        <title>Decoding mammalian ribosome-mRNA states by translational GTPase complexes.</title>
        <authorList>
            <person name="Shao S."/>
            <person name="Murray J."/>
            <person name="Brown A."/>
            <person name="Taunton J."/>
            <person name="Ramakrishnan V."/>
            <person name="Hegde R.S."/>
        </authorList>
    </citation>
    <scope>STRUCTURE BY ELECTRON MICROSCOPY (3.31 ANGSTROMS) OF RIBOSOME</scope>
    <scope>FUNCTION</scope>
    <scope>SUBCELLULAR LOCATION</scope>
    <scope>SUBUNIT</scope>
</reference>
<reference evidence="24 25" key="6">
    <citation type="journal article" date="2018" name="Elife">
        <title>Dual tRNA mimicry in the Cricket paralysis virus IRES uncovers an unexpected similarity with the Hepatitis C Virus IRES.</title>
        <authorList>
            <person name="Pisareva V.P."/>
            <person name="Pisarev A.V."/>
            <person name="Fernandez I.S."/>
        </authorList>
    </citation>
    <scope>STRUCTURE BY ELECTRON MICROSCOPY (3.20 ANGSTROMS) OF RIBOSOME</scope>
    <scope>SUBCELLULAR LOCATION</scope>
    <scope>SUBUNIT</scope>
</reference>
<reference evidence="28 29" key="7">
    <citation type="journal article" date="2019" name="Elife">
        <title>Structural and mutational analysis of the ribosome-arresting human XBP1u.</title>
        <authorList>
            <person name="Shanmuganathan V."/>
            <person name="Schiller N."/>
            <person name="Magoulopoulou A."/>
            <person name="Cheng J."/>
            <person name="Braunger K."/>
            <person name="Cymer F."/>
            <person name="Berninghausen O."/>
            <person name="Beatrix B."/>
            <person name="Kohno K."/>
            <person name="von Heijne G."/>
            <person name="Beckmann R."/>
        </authorList>
    </citation>
    <scope>STRUCTURE BY ELECTRON MICROSCOPY (3.00 ANGSTROMS) OF 3-143 OF RIBOSOME</scope>
    <scope>SUBCELLULAR LOCATION</scope>
    <scope>SUBUNIT</scope>
</reference>
<reference evidence="26 27" key="8">
    <citation type="journal article" date="2019" name="EMBO J.">
        <title>The Israeli acute paralysis virus IRES captures host ribosomes by mimicking a ribosomal state with hybrid tRNAs.</title>
        <authorList>
            <person name="Acosta-Reyes F."/>
            <person name="Neupane R."/>
            <person name="Frank J."/>
            <person name="Fernandez I.S."/>
        </authorList>
    </citation>
    <scope>STRUCTURE BY ELECTRON MICROSCOPY (3.10 ANGSTROMS) OF RIBOSOME</scope>
    <scope>SUBUNIT</scope>
    <scope>SUBCELLULAR LOCATION</scope>
</reference>
<reference evidence="30" key="9">
    <citation type="journal article" date="2019" name="Nat. Struct. Mol. Biol.">
        <title>Mechanism of ribosome stalling during translation of a poly(A) tail.</title>
        <authorList>
            <person name="Chandrasekaran V."/>
            <person name="Juszkiewicz S."/>
            <person name="Choi J."/>
            <person name="Puglisi J.D."/>
            <person name="Brown A."/>
            <person name="Shao S."/>
            <person name="Ramakrishnan V."/>
            <person name="Hegde R.S."/>
        </authorList>
    </citation>
    <scope>STRUCTURE BY ELECTRON MICROSCOPY (2.80 ANGSTROMS) OF RIBOSOME</scope>
    <scope>SUBCELLULAR LOCATION</scope>
    <scope>SUBUNIT</scope>
</reference>
<reference evidence="33 34" key="10">
    <citation type="journal article" date="2020" name="Cell Rep.">
        <title>The Halastavi arva virus intergenic region IRES promotes translation by the simplest possible initiation mechanism.</title>
        <authorList>
            <person name="Abaeva I.S."/>
            <person name="Vicens Q."/>
            <person name="Bochler A."/>
            <person name="Soufari H."/>
            <person name="Simonetti A."/>
            <person name="Pestova T.V."/>
            <person name="Hashem Y."/>
            <person name="Hellen C.U.T."/>
        </authorList>
    </citation>
    <scope>STRUCTURE BY ELECTRON MICROSCOPY (3.49 ANGSTROMS) OF RIBOSOME</scope>
    <scope>SUBCELLULAR LOCATION</scope>
    <scope>SUBUNIT</scope>
</reference>
<reference evidence="31 32" key="11">
    <citation type="journal article" date="2020" name="Elife">
        <title>A complex IRES at the 5'-UTR of a viral mRNA assembles a functional 48S complex via an uAUG intermediate.</title>
        <authorList>
            <person name="Neupane R."/>
            <person name="Pisareva V.P."/>
            <person name="Rodriguez C.F."/>
            <person name="Pisarev A.V."/>
            <person name="Fernandez I.S."/>
        </authorList>
    </citation>
    <scope>STRUCTURE BY ELECTRON MICROSCOPY (3.00 ANGSTROMS) OF RIBOSOME</scope>
    <scope>SUBUNIT</scope>
    <scope>SUBCELLULAR LOCATION</scope>
</reference>
<reference evidence="36 37" key="12">
    <citation type="journal article" date="2022" name="EMBO J.">
        <title>Molecular architecture of 40S translation initiation complexes on the hepatitis C virus IRES.</title>
        <authorList>
            <person name="Brown Z.P."/>
            <person name="Abaeva I.S."/>
            <person name="De S."/>
            <person name="Hellen C.U.T."/>
            <person name="Pestova T.V."/>
            <person name="Frank J."/>
        </authorList>
    </citation>
    <scope>STRUCTURE BY ELECTRON MICROSCOPY (3.50 ANGSTROMS) OF RIBOSOME</scope>
    <scope>SUBCELLULAR LOCATION</scope>
    <scope>SUBUNIT</scope>
</reference>
<reference evidence="35" key="13">
    <citation type="journal article" date="2023" name="Nature">
        <title>A molecular network of conserved factors keeps ribosomes dormant in the egg.</title>
        <authorList>
            <person name="Leesch F."/>
            <person name="Lorenzo-Orts L."/>
            <person name="Pribitzer C."/>
            <person name="Grishkovskaya I."/>
            <person name="Roehsner J."/>
            <person name="Chugunova A."/>
            <person name="Matzinger M."/>
            <person name="Roitinger E."/>
            <person name="Belacic K."/>
            <person name="Kandolf S."/>
            <person name="Lin T.Y."/>
            <person name="Mechtler K."/>
            <person name="Meinhart A."/>
            <person name="Haselbach D."/>
            <person name="Pauli A."/>
        </authorList>
    </citation>
    <scope>STRUCTURE BY ELECTRON MICROSCOPY (2.30 ANGSTROMS) OF RIBOSOME</scope>
    <scope>SUBCELLULAR LOCATION</scope>
    <scope>SUBUNIT</scope>
</reference>
<protein>
    <recommendedName>
        <fullName>Small ribosomal subunit protein eS19</fullName>
    </recommendedName>
    <alternativeName>
        <fullName>40S ribosomal protein S19</fullName>
    </alternativeName>
</protein>
<keyword id="KW-0002">3D-structure</keyword>
<keyword id="KW-0007">Acetylation</keyword>
<keyword id="KW-0963">Cytoplasm</keyword>
<keyword id="KW-0945">Host-virus interaction</keyword>
<keyword id="KW-0488">Methylation</keyword>
<keyword id="KW-0539">Nucleus</keyword>
<keyword id="KW-1185">Reference proteome</keyword>
<keyword id="KW-0687">Ribonucleoprotein</keyword>
<keyword id="KW-0689">Ribosomal protein</keyword>
<organism>
    <name type="scientific">Oryctolagus cuniculus</name>
    <name type="common">Rabbit</name>
    <dbReference type="NCBI Taxonomy" id="9986"/>
    <lineage>
        <taxon>Eukaryota</taxon>
        <taxon>Metazoa</taxon>
        <taxon>Chordata</taxon>
        <taxon>Craniata</taxon>
        <taxon>Vertebrata</taxon>
        <taxon>Euteleostomi</taxon>
        <taxon>Mammalia</taxon>
        <taxon>Eutheria</taxon>
        <taxon>Euarchontoglires</taxon>
        <taxon>Glires</taxon>
        <taxon>Lagomorpha</taxon>
        <taxon>Leporidae</taxon>
        <taxon>Oryctolagus</taxon>
    </lineage>
</organism>
<proteinExistence type="evidence at protein level"/>
<sequence length="145" mass="16204">MPGVTVKDVNQQEFVRALAAFLKKSGKLKVPEWVDTVKLAKHKELAPYDENWFYTRAASTARHLYLRGGAGVGSMTKIYGGRQRNGVMPSHFSRGSKSVARRVLQALEGLKMVEKDQDWGRKLTPQGQRDLDRIAGQVAAAKKKH</sequence>
<evidence type="ECO:0000250" key="1">
    <source>
        <dbReference type="UniProtKB" id="P39019"/>
    </source>
</evidence>
<evidence type="ECO:0000250" key="2">
    <source>
        <dbReference type="UniProtKB" id="Q9CZX8"/>
    </source>
</evidence>
<evidence type="ECO:0000269" key="3">
    <source>
    </source>
</evidence>
<evidence type="ECO:0000269" key="4">
    <source>
    </source>
</evidence>
<evidence type="ECO:0000269" key="5">
    <source>
    </source>
</evidence>
<evidence type="ECO:0000269" key="6">
    <source>
    </source>
</evidence>
<evidence type="ECO:0000269" key="7">
    <source>
    </source>
</evidence>
<evidence type="ECO:0000269" key="8">
    <source>
    </source>
</evidence>
<evidence type="ECO:0000269" key="9">
    <source>
    </source>
</evidence>
<evidence type="ECO:0000269" key="10">
    <source>
    </source>
</evidence>
<evidence type="ECO:0000269" key="11">
    <source>
    </source>
</evidence>
<evidence type="ECO:0000269" key="12">
    <source>
    </source>
</evidence>
<evidence type="ECO:0000269" key="13">
    <source>
    </source>
</evidence>
<evidence type="ECO:0000269" key="14">
    <source>
    </source>
</evidence>
<evidence type="ECO:0000305" key="15"/>
<evidence type="ECO:0007744" key="16">
    <source>
        <dbReference type="PDB" id="3JAG"/>
    </source>
</evidence>
<evidence type="ECO:0007744" key="17">
    <source>
        <dbReference type="PDB" id="3JAH"/>
    </source>
</evidence>
<evidence type="ECO:0007744" key="18">
    <source>
        <dbReference type="PDB" id="4D5L"/>
    </source>
</evidence>
<evidence type="ECO:0007744" key="19">
    <source>
        <dbReference type="PDB" id="4D61"/>
    </source>
</evidence>
<evidence type="ECO:0007744" key="20">
    <source>
        <dbReference type="PDB" id="4KZX"/>
    </source>
</evidence>
<evidence type="ECO:0007744" key="21">
    <source>
        <dbReference type="PDB" id="4KZY"/>
    </source>
</evidence>
<evidence type="ECO:0007744" key="22">
    <source>
        <dbReference type="PDB" id="5LZS"/>
    </source>
</evidence>
<evidence type="ECO:0007744" key="23">
    <source>
        <dbReference type="PDB" id="5LZT"/>
    </source>
</evidence>
<evidence type="ECO:0007744" key="24">
    <source>
        <dbReference type="PDB" id="6D90"/>
    </source>
</evidence>
<evidence type="ECO:0007744" key="25">
    <source>
        <dbReference type="PDB" id="6D9J"/>
    </source>
</evidence>
<evidence type="ECO:0007744" key="26">
    <source>
        <dbReference type="PDB" id="6P4G"/>
    </source>
</evidence>
<evidence type="ECO:0007744" key="27">
    <source>
        <dbReference type="PDB" id="6P4H"/>
    </source>
</evidence>
<evidence type="ECO:0007744" key="28">
    <source>
        <dbReference type="PDB" id="6R5Q"/>
    </source>
</evidence>
<evidence type="ECO:0007744" key="29">
    <source>
        <dbReference type="PDB" id="6R6G"/>
    </source>
</evidence>
<evidence type="ECO:0007744" key="30">
    <source>
        <dbReference type="PDB" id="6SGC"/>
    </source>
</evidence>
<evidence type="ECO:0007744" key="31">
    <source>
        <dbReference type="PDB" id="6W2S"/>
    </source>
</evidence>
<evidence type="ECO:0007744" key="32">
    <source>
        <dbReference type="PDB" id="6W2T"/>
    </source>
</evidence>
<evidence type="ECO:0007744" key="33">
    <source>
        <dbReference type="PDB" id="6ZVK"/>
    </source>
</evidence>
<evidence type="ECO:0007744" key="34">
    <source>
        <dbReference type="PDB" id="7A01"/>
    </source>
</evidence>
<evidence type="ECO:0007744" key="35">
    <source>
        <dbReference type="PDB" id="7OYD"/>
    </source>
</evidence>
<evidence type="ECO:0007744" key="36">
    <source>
        <dbReference type="PDB" id="7SYI"/>
    </source>
</evidence>
<evidence type="ECO:0007744" key="37">
    <source>
        <dbReference type="PDB" id="7SYJ"/>
    </source>
</evidence>
<evidence type="ECO:0007829" key="38">
    <source>
        <dbReference type="PDB" id="6P4G"/>
    </source>
</evidence>
<evidence type="ECO:0007829" key="39">
    <source>
        <dbReference type="PDB" id="6YAL"/>
    </source>
</evidence>
<evidence type="ECO:0007829" key="40">
    <source>
        <dbReference type="PDB" id="7JQB"/>
    </source>
</evidence>
<evidence type="ECO:0007829" key="41">
    <source>
        <dbReference type="PDB" id="8P03"/>
    </source>
</evidence>
<accession>G1TN62</accession>
<comment type="function">
    <text evidence="3 4 5 6">Component of the small ribosomal subunit (PubMed:23873042, PubMed:25601755, PubMed:26245381, PubMed:27863242). The ribosome is a large ribonucleoprotein complex responsible for the synthesis of proteins in the cell (PubMed:23873042, PubMed:25601755, PubMed:26245381, PubMed:27863242). Required for pre-rRNA processing and maturation of 40S ribosomal subunits (PubMed:23873042, PubMed:25601755, PubMed:26245381, PubMed:27863242). Part of the small subunit (SSU) processome, first precursor of the small eukaryotic ribosomal subunit (PubMed:23873042, PubMed:25601755, PubMed:26245381, PubMed:27863242). During the assembly of the SSU processome in the nucleolus, many ribosome biogenesis factors, an RNA chaperone and ribosomal proteins associate with the nascent pre-rRNA and work in concert to generate RNA folding, modifications, rearrangements and cleavage as well as targeted degradation of pre-ribosomal RNA by the RNA exosome (PubMed:23873042, PubMed:25601755, PubMed:26245381, PubMed:27863242).</text>
</comment>
<comment type="subunit">
    <text evidence="1 2 3 4 5 6 7 8 9 10 11 12 13 14">Component of the small ribosomal subunit (PubMed:23873042, PubMed:25601755, PubMed:26245381, PubMed:27863242, PubMed:29856316, PubMed:31246176, PubMed:31609474, PubMed:31768042, PubMed:32286223, PubMed:33296660, PubMed:35822879, PubMed:36653451). Part of the small subunit (SSU) processome, composed of more than 70 proteins and the RNA chaperone small nucleolar RNA (snoRNA) U3 (PubMed:23873042, PubMed:25601755, PubMed:26245381, PubMed:27863242, PubMed:29856316, PubMed:31246176, PubMed:31609474, PubMed:31768042, PubMed:32286223, PubMed:33296660, PubMed:35822879, PubMed:36653451). Interacts with RPS19BP1; the interaction is direct and mediates the integration of RPS19 in state post-A1 (By similarity). Interacts with RPS19BP1 (By similarity).</text>
</comment>
<comment type="subcellular location">
    <subcellularLocation>
        <location evidence="3 4 5 6 7 8 9 10 11 12 13 14">Cytoplasm</location>
    </subcellularLocation>
    <subcellularLocation>
        <location evidence="1">Nucleus</location>
        <location evidence="1">Nucleolus</location>
    </subcellularLocation>
</comment>
<comment type="similarity">
    <text evidence="15">Belongs to the eukaryotic ribosomal protein eS19 family.</text>
</comment>
<name>RS19_RABIT</name>
<dbReference type="EMBL" id="AAGW02048164">
    <property type="status" value="NOT_ANNOTATED_CDS"/>
    <property type="molecule type" value="Genomic_DNA"/>
</dbReference>
<dbReference type="RefSeq" id="XP_002716238.1">
    <property type="nucleotide sequence ID" value="XM_002716192.3"/>
</dbReference>
<dbReference type="PDB" id="3JAG">
    <property type="method" value="EM"/>
    <property type="resolution" value="3.65 A"/>
    <property type="chains" value="TT=4-144"/>
</dbReference>
<dbReference type="PDB" id="3JAH">
    <property type="method" value="EM"/>
    <property type="resolution" value="3.45 A"/>
    <property type="chains" value="TT=4-144"/>
</dbReference>
<dbReference type="PDB" id="3JAI">
    <property type="method" value="EM"/>
    <property type="resolution" value="3.65 A"/>
    <property type="chains" value="TT=4-144"/>
</dbReference>
<dbReference type="PDB" id="4D5L">
    <property type="method" value="EM"/>
    <property type="resolution" value="9.00 A"/>
    <property type="chains" value="T=1-145"/>
</dbReference>
<dbReference type="PDB" id="4D61">
    <property type="method" value="EM"/>
    <property type="resolution" value="9.00 A"/>
    <property type="chains" value="T=1-145"/>
</dbReference>
<dbReference type="PDB" id="4KZX">
    <property type="method" value="X-ray"/>
    <property type="resolution" value="7.81 A"/>
    <property type="chains" value="T=1-145"/>
</dbReference>
<dbReference type="PDB" id="4KZY">
    <property type="method" value="X-ray"/>
    <property type="resolution" value="7.01 A"/>
    <property type="chains" value="T=1-145"/>
</dbReference>
<dbReference type="PDB" id="4KZZ">
    <property type="method" value="X-ray"/>
    <property type="resolution" value="7.03 A"/>
    <property type="chains" value="T=1-145"/>
</dbReference>
<dbReference type="PDB" id="5K0Y">
    <property type="method" value="EM"/>
    <property type="resolution" value="5.80 A"/>
    <property type="chains" value="R=4-144"/>
</dbReference>
<dbReference type="PDB" id="5LZS">
    <property type="method" value="EM"/>
    <property type="resolution" value="3.31 A"/>
    <property type="chains" value="TT=1-145"/>
</dbReference>
<dbReference type="PDB" id="5LZT">
    <property type="method" value="EM"/>
    <property type="resolution" value="3.65 A"/>
    <property type="chains" value="TT=1-145"/>
</dbReference>
<dbReference type="PDB" id="5LZU">
    <property type="method" value="EM"/>
    <property type="resolution" value="3.75 A"/>
    <property type="chains" value="TT=1-145"/>
</dbReference>
<dbReference type="PDB" id="5LZV">
    <property type="method" value="EM"/>
    <property type="resolution" value="3.35 A"/>
    <property type="chains" value="TT=1-145"/>
</dbReference>
<dbReference type="PDB" id="5LZW">
    <property type="method" value="EM"/>
    <property type="resolution" value="3.53 A"/>
    <property type="chains" value="TT=1-145"/>
</dbReference>
<dbReference type="PDB" id="5LZX">
    <property type="method" value="EM"/>
    <property type="resolution" value="3.67 A"/>
    <property type="chains" value="TT=1-145"/>
</dbReference>
<dbReference type="PDB" id="5LZY">
    <property type="method" value="EM"/>
    <property type="resolution" value="3.99 A"/>
    <property type="chains" value="TT=1-145"/>
</dbReference>
<dbReference type="PDB" id="5LZZ">
    <property type="method" value="EM"/>
    <property type="resolution" value="3.47 A"/>
    <property type="chains" value="TT=1-145"/>
</dbReference>
<dbReference type="PDB" id="6D90">
    <property type="method" value="EM"/>
    <property type="resolution" value="3.20 A"/>
    <property type="chains" value="UU=1-145"/>
</dbReference>
<dbReference type="PDB" id="6D9J">
    <property type="method" value="EM"/>
    <property type="resolution" value="3.20 A"/>
    <property type="chains" value="UU=1-145"/>
</dbReference>
<dbReference type="PDB" id="6P4G">
    <property type="method" value="EM"/>
    <property type="resolution" value="3.10 A"/>
    <property type="chains" value="U=1-145"/>
</dbReference>
<dbReference type="PDB" id="6P4H">
    <property type="method" value="EM"/>
    <property type="resolution" value="3.20 A"/>
    <property type="chains" value="U=1-145"/>
</dbReference>
<dbReference type="PDB" id="6P5I">
    <property type="method" value="EM"/>
    <property type="resolution" value="3.10 A"/>
    <property type="chains" value="U=1-145"/>
</dbReference>
<dbReference type="PDB" id="6P5J">
    <property type="method" value="EM"/>
    <property type="resolution" value="3.10 A"/>
    <property type="chains" value="U=1-145"/>
</dbReference>
<dbReference type="PDB" id="6P5K">
    <property type="method" value="EM"/>
    <property type="resolution" value="3.10 A"/>
    <property type="chains" value="U=1-145"/>
</dbReference>
<dbReference type="PDB" id="6P5N">
    <property type="method" value="EM"/>
    <property type="resolution" value="3.20 A"/>
    <property type="chains" value="U=1-145"/>
</dbReference>
<dbReference type="PDB" id="6R5Q">
    <property type="method" value="EM"/>
    <property type="resolution" value="3.00 A"/>
    <property type="chains" value="PP=3-143"/>
</dbReference>
<dbReference type="PDB" id="6R6G">
    <property type="method" value="EM"/>
    <property type="resolution" value="3.70 A"/>
    <property type="chains" value="PP=3-143"/>
</dbReference>
<dbReference type="PDB" id="6R6P">
    <property type="method" value="EM"/>
    <property type="resolution" value="3.10 A"/>
    <property type="chains" value="PP=3-143"/>
</dbReference>
<dbReference type="PDB" id="6R7Q">
    <property type="method" value="EM"/>
    <property type="resolution" value="3.90 A"/>
    <property type="chains" value="PP=3-143"/>
</dbReference>
<dbReference type="PDB" id="6SGC">
    <property type="method" value="EM"/>
    <property type="resolution" value="2.80 A"/>
    <property type="chains" value="U1=1-145"/>
</dbReference>
<dbReference type="PDB" id="6W2S">
    <property type="method" value="EM"/>
    <property type="resolution" value="3.00 A"/>
    <property type="chains" value="U=1-145"/>
</dbReference>
<dbReference type="PDB" id="6W2T">
    <property type="method" value="EM"/>
    <property type="resolution" value="3.36 A"/>
    <property type="chains" value="U=1-145"/>
</dbReference>
<dbReference type="PDB" id="6YAL">
    <property type="method" value="EM"/>
    <property type="resolution" value="3.00 A"/>
    <property type="chains" value="V=4-144"/>
</dbReference>
<dbReference type="PDB" id="6YAM">
    <property type="method" value="EM"/>
    <property type="resolution" value="3.60 A"/>
    <property type="chains" value="V=1-145"/>
</dbReference>
<dbReference type="PDB" id="6YAN">
    <property type="method" value="EM"/>
    <property type="resolution" value="3.48 A"/>
    <property type="chains" value="V=4-144"/>
</dbReference>
<dbReference type="PDB" id="6ZVK">
    <property type="method" value="EM"/>
    <property type="resolution" value="3.49 A"/>
    <property type="chains" value="H5=4-144"/>
</dbReference>
<dbReference type="PDB" id="7A01">
    <property type="method" value="EM"/>
    <property type="resolution" value="3.60 A"/>
    <property type="chains" value="H5=4-144"/>
</dbReference>
<dbReference type="PDB" id="7JQB">
    <property type="method" value="EM"/>
    <property type="resolution" value="2.70 A"/>
    <property type="chains" value="U=1-145"/>
</dbReference>
<dbReference type="PDB" id="7JQC">
    <property type="method" value="EM"/>
    <property type="resolution" value="3.30 A"/>
    <property type="chains" value="U=1-145"/>
</dbReference>
<dbReference type="PDB" id="7MDZ">
    <property type="method" value="EM"/>
    <property type="resolution" value="3.20 A"/>
    <property type="chains" value="TT=1-145"/>
</dbReference>
<dbReference type="PDB" id="7NWG">
    <property type="method" value="EM"/>
    <property type="resolution" value="3.80 A"/>
    <property type="chains" value="U2=1-145"/>
</dbReference>
<dbReference type="PDB" id="7OYD">
    <property type="method" value="EM"/>
    <property type="resolution" value="2.30 A"/>
    <property type="chains" value="TT=1-145"/>
</dbReference>
<dbReference type="PDB" id="7SYG">
    <property type="method" value="EM"/>
    <property type="resolution" value="4.30 A"/>
    <property type="chains" value="U=1-145"/>
</dbReference>
<dbReference type="PDB" id="7SYH">
    <property type="method" value="EM"/>
    <property type="resolution" value="4.60 A"/>
    <property type="chains" value="U=1-145"/>
</dbReference>
<dbReference type="PDB" id="7SYI">
    <property type="method" value="EM"/>
    <property type="resolution" value="4.50 A"/>
    <property type="chains" value="U=1-145"/>
</dbReference>
<dbReference type="PDB" id="7SYJ">
    <property type="method" value="EM"/>
    <property type="resolution" value="4.80 A"/>
    <property type="chains" value="U=1-145"/>
</dbReference>
<dbReference type="PDB" id="7SYK">
    <property type="method" value="EM"/>
    <property type="resolution" value="4.20 A"/>
    <property type="chains" value="U=1-145"/>
</dbReference>
<dbReference type="PDB" id="7SYL">
    <property type="method" value="EM"/>
    <property type="resolution" value="4.50 A"/>
    <property type="chains" value="U=1-145"/>
</dbReference>
<dbReference type="PDB" id="7SYM">
    <property type="method" value="EM"/>
    <property type="resolution" value="4.80 A"/>
    <property type="chains" value="U=1-145"/>
</dbReference>
<dbReference type="PDB" id="7SYN">
    <property type="method" value="EM"/>
    <property type="resolution" value="4.00 A"/>
    <property type="chains" value="U=1-145"/>
</dbReference>
<dbReference type="PDB" id="7SYO">
    <property type="method" value="EM"/>
    <property type="resolution" value="4.60 A"/>
    <property type="chains" value="U=1-145"/>
</dbReference>
<dbReference type="PDB" id="7SYP">
    <property type="method" value="EM"/>
    <property type="resolution" value="4.00 A"/>
    <property type="chains" value="U=1-145"/>
</dbReference>
<dbReference type="PDB" id="7SYQ">
    <property type="method" value="EM"/>
    <property type="resolution" value="3.80 A"/>
    <property type="chains" value="U=1-145"/>
</dbReference>
<dbReference type="PDB" id="7SYR">
    <property type="method" value="EM"/>
    <property type="resolution" value="3.60 A"/>
    <property type="chains" value="U=1-145"/>
</dbReference>
<dbReference type="PDB" id="7SYS">
    <property type="method" value="EM"/>
    <property type="resolution" value="3.50 A"/>
    <property type="chains" value="U=1-145"/>
</dbReference>
<dbReference type="PDB" id="7SYT">
    <property type="method" value="EM"/>
    <property type="resolution" value="4.40 A"/>
    <property type="chains" value="U=1-145"/>
</dbReference>
<dbReference type="PDB" id="7SYU">
    <property type="method" value="EM"/>
    <property type="resolution" value="4.60 A"/>
    <property type="chains" value="U=1-145"/>
</dbReference>
<dbReference type="PDB" id="7SYV">
    <property type="method" value="EM"/>
    <property type="resolution" value="3.90 A"/>
    <property type="chains" value="U=1-145"/>
</dbReference>
<dbReference type="PDB" id="7SYW">
    <property type="method" value="EM"/>
    <property type="resolution" value="3.70 A"/>
    <property type="chains" value="U=1-145"/>
</dbReference>
<dbReference type="PDB" id="7SYX">
    <property type="method" value="EM"/>
    <property type="resolution" value="3.70 A"/>
    <property type="chains" value="U=1-145"/>
</dbReference>
<dbReference type="PDB" id="8BHF">
    <property type="method" value="EM"/>
    <property type="resolution" value="3.10 A"/>
    <property type="chains" value="U3=3-143"/>
</dbReference>
<dbReference type="PDB" id="8BTK">
    <property type="method" value="EM"/>
    <property type="resolution" value="3.50 A"/>
    <property type="chains" value="As=1-145"/>
</dbReference>
<dbReference type="PDB" id="8P03">
    <property type="method" value="EM"/>
    <property type="resolution" value="3.04 A"/>
    <property type="chains" value="V=4-144"/>
</dbReference>
<dbReference type="PDB" id="8P09">
    <property type="method" value="EM"/>
    <property type="resolution" value="3.30 A"/>
    <property type="chains" value="V=4-144"/>
</dbReference>
<dbReference type="PDB" id="8P2K">
    <property type="method" value="EM"/>
    <property type="resolution" value="2.90 A"/>
    <property type="chains" value="As=1-145"/>
</dbReference>
<dbReference type="PDB" id="8SCB">
    <property type="method" value="EM"/>
    <property type="resolution" value="2.50 A"/>
    <property type="chains" value="TT=1-145"/>
</dbReference>
<dbReference type="PDB" id="8VFT">
    <property type="method" value="EM"/>
    <property type="resolution" value="3.30 A"/>
    <property type="chains" value="TT=1-145"/>
</dbReference>
<dbReference type="PDB" id="9BDL">
    <property type="method" value="EM"/>
    <property type="resolution" value="2.80 A"/>
    <property type="chains" value="AS19=3-143"/>
</dbReference>
<dbReference type="PDB" id="9BDN">
    <property type="method" value="EM"/>
    <property type="resolution" value="3.10 A"/>
    <property type="chains" value="AS19=3-143"/>
</dbReference>
<dbReference type="PDB" id="9BDP">
    <property type="method" value="EM"/>
    <property type="resolution" value="3.70 A"/>
    <property type="chains" value="AS19=3-143"/>
</dbReference>
<dbReference type="PDB" id="9F1B">
    <property type="method" value="EM"/>
    <property type="resolution" value="3.01 A"/>
    <property type="chains" value="As=1-145"/>
</dbReference>
<dbReference type="PDB" id="9F1C">
    <property type="method" value="EM"/>
    <property type="resolution" value="3.78 A"/>
    <property type="chains" value="As=1-145"/>
</dbReference>
<dbReference type="PDB" id="9F1D">
    <property type="method" value="EM"/>
    <property type="resolution" value="3.26 A"/>
    <property type="chains" value="As=1-145"/>
</dbReference>
<dbReference type="PDBsum" id="3JAG"/>
<dbReference type="PDBsum" id="3JAH"/>
<dbReference type="PDBsum" id="3JAI"/>
<dbReference type="PDBsum" id="4D5L"/>
<dbReference type="PDBsum" id="4D61"/>
<dbReference type="PDBsum" id="4KZX"/>
<dbReference type="PDBsum" id="4KZY"/>
<dbReference type="PDBsum" id="4KZZ"/>
<dbReference type="PDBsum" id="5K0Y"/>
<dbReference type="PDBsum" id="5LZS"/>
<dbReference type="PDBsum" id="5LZT"/>
<dbReference type="PDBsum" id="5LZU"/>
<dbReference type="PDBsum" id="5LZV"/>
<dbReference type="PDBsum" id="5LZW"/>
<dbReference type="PDBsum" id="5LZX"/>
<dbReference type="PDBsum" id="5LZY"/>
<dbReference type="PDBsum" id="5LZZ"/>
<dbReference type="PDBsum" id="6D90"/>
<dbReference type="PDBsum" id="6D9J"/>
<dbReference type="PDBsum" id="6P4G"/>
<dbReference type="PDBsum" id="6P4H"/>
<dbReference type="PDBsum" id="6P5I"/>
<dbReference type="PDBsum" id="6P5J"/>
<dbReference type="PDBsum" id="6P5K"/>
<dbReference type="PDBsum" id="6P5N"/>
<dbReference type="PDBsum" id="6R5Q"/>
<dbReference type="PDBsum" id="6R6G"/>
<dbReference type="PDBsum" id="6R6P"/>
<dbReference type="PDBsum" id="6R7Q"/>
<dbReference type="PDBsum" id="6SGC"/>
<dbReference type="PDBsum" id="6W2S"/>
<dbReference type="PDBsum" id="6W2T"/>
<dbReference type="PDBsum" id="6YAL"/>
<dbReference type="PDBsum" id="6YAM"/>
<dbReference type="PDBsum" id="6YAN"/>
<dbReference type="PDBsum" id="6ZVK"/>
<dbReference type="PDBsum" id="7A01"/>
<dbReference type="PDBsum" id="7JQB"/>
<dbReference type="PDBsum" id="7JQC"/>
<dbReference type="PDBsum" id="7MDZ"/>
<dbReference type="PDBsum" id="7NWG"/>
<dbReference type="PDBsum" id="7OYD"/>
<dbReference type="PDBsum" id="7SYG"/>
<dbReference type="PDBsum" id="7SYH"/>
<dbReference type="PDBsum" id="7SYI"/>
<dbReference type="PDBsum" id="7SYJ"/>
<dbReference type="PDBsum" id="7SYK"/>
<dbReference type="PDBsum" id="7SYL"/>
<dbReference type="PDBsum" id="7SYM"/>
<dbReference type="PDBsum" id="7SYN"/>
<dbReference type="PDBsum" id="7SYO"/>
<dbReference type="PDBsum" id="7SYP"/>
<dbReference type="PDBsum" id="7SYQ"/>
<dbReference type="PDBsum" id="7SYR"/>
<dbReference type="PDBsum" id="7SYS"/>
<dbReference type="PDBsum" id="7SYT"/>
<dbReference type="PDBsum" id="7SYU"/>
<dbReference type="PDBsum" id="7SYV"/>
<dbReference type="PDBsum" id="7SYW"/>
<dbReference type="PDBsum" id="7SYX"/>
<dbReference type="PDBsum" id="8BHF"/>
<dbReference type="PDBsum" id="8BTK"/>
<dbReference type="PDBsum" id="8P03"/>
<dbReference type="PDBsum" id="8P09"/>
<dbReference type="PDBsum" id="8P2K"/>
<dbReference type="PDBsum" id="8SCB"/>
<dbReference type="PDBsum" id="8VFT"/>
<dbReference type="PDBsum" id="9BDL"/>
<dbReference type="PDBsum" id="9BDN"/>
<dbReference type="PDBsum" id="9BDP"/>
<dbReference type="PDBsum" id="9F1B"/>
<dbReference type="PDBsum" id="9F1C"/>
<dbReference type="PDBsum" id="9F1D"/>
<dbReference type="EMDB" id="EMD-0099"/>
<dbReference type="EMDB" id="EMD-0100"/>
<dbReference type="EMDB" id="EMD-0192"/>
<dbReference type="EMDB" id="EMD-0194"/>
<dbReference type="EMDB" id="EMD-0195"/>
<dbReference type="EMDB" id="EMD-0197"/>
<dbReference type="EMDB" id="EMD-10181"/>
<dbReference type="EMDB" id="EMD-10760"/>
<dbReference type="EMDB" id="EMD-10761"/>
<dbReference type="EMDB" id="EMD-10762"/>
<dbReference type="EMDB" id="EMD-11459"/>
<dbReference type="EMDB" id="EMD-11590"/>
<dbReference type="EMDB" id="EMD-12631"/>
<dbReference type="EMDB" id="EMD-12632"/>
<dbReference type="EMDB" id="EMD-12633"/>
<dbReference type="EMDB" id="EMD-13114"/>
<dbReference type="EMDB" id="EMD-16052"/>
<dbReference type="EMDB" id="EMD-16232"/>
<dbReference type="EMDB" id="EMD-17329"/>
<dbReference type="EMDB" id="EMD-17330"/>
<dbReference type="EMDB" id="EMD-17367"/>
<dbReference type="EMDB" id="EMD-20248"/>
<dbReference type="EMDB" id="EMD-20249"/>
<dbReference type="EMDB" id="EMD-20255"/>
<dbReference type="EMDB" id="EMD-20256"/>
<dbReference type="EMDB" id="EMD-20257"/>
<dbReference type="EMDB" id="EMD-20258"/>
<dbReference type="EMDB" id="EMD-21529"/>
<dbReference type="EMDB" id="EMD-21530"/>
<dbReference type="EMDB" id="EMD-22432"/>
<dbReference type="EMDB" id="EMD-22433"/>
<dbReference type="EMDB" id="EMD-23785"/>
<dbReference type="EMDB" id="EMD-25527"/>
<dbReference type="EMDB" id="EMD-25528"/>
<dbReference type="EMDB" id="EMD-25529"/>
<dbReference type="EMDB" id="EMD-25530"/>
<dbReference type="EMDB" id="EMD-25531"/>
<dbReference type="EMDB" id="EMD-25532"/>
<dbReference type="EMDB" id="EMD-25533"/>
<dbReference type="EMDB" id="EMD-25534"/>
<dbReference type="EMDB" id="EMD-25535"/>
<dbReference type="EMDB" id="EMD-25536"/>
<dbReference type="EMDB" id="EMD-25537"/>
<dbReference type="EMDB" id="EMD-25538"/>
<dbReference type="EMDB" id="EMD-25539"/>
<dbReference type="EMDB" id="EMD-25540"/>
<dbReference type="EMDB" id="EMD-25541"/>
<dbReference type="EMDB" id="EMD-25542"/>
<dbReference type="EMDB" id="EMD-25543"/>
<dbReference type="EMDB" id="EMD-25544"/>
<dbReference type="EMDB" id="EMD-26035"/>
<dbReference type="EMDB" id="EMD-26036"/>
<dbReference type="EMDB" id="EMD-40344"/>
<dbReference type="EMDB" id="EMD-4130"/>
<dbReference type="EMDB" id="EMD-4131"/>
<dbReference type="EMDB" id="EMD-4132"/>
<dbReference type="EMDB" id="EMD-4133"/>
<dbReference type="EMDB" id="EMD-4134"/>
<dbReference type="EMDB" id="EMD-4135"/>
<dbReference type="EMDB" id="EMD-4136"/>
<dbReference type="EMDB" id="EMD-4137"/>
<dbReference type="EMDB" id="EMD-43189"/>
<dbReference type="EMDB" id="EMD-44461"/>
<dbReference type="EMDB" id="EMD-44463"/>
<dbReference type="EMDB" id="EMD-44464"/>
<dbReference type="EMDB" id="EMD-45307"/>
<dbReference type="EMDB" id="EMD-4729"/>
<dbReference type="EMDB" id="EMD-4735"/>
<dbReference type="EMDB" id="EMD-4737"/>
<dbReference type="EMDB" id="EMD-4745"/>
<dbReference type="EMDB" id="EMD-50124"/>
<dbReference type="EMDB" id="EMD-50125"/>
<dbReference type="EMDB" id="EMD-50126"/>
<dbReference type="EMDB" id="EMD-7834"/>
<dbReference type="EMDB" id="EMD-7836"/>
<dbReference type="EMDB" id="EMD-8190"/>
<dbReference type="EMDB" id="EMD-9240"/>
<dbReference type="EMDB" id="EMD-9242"/>
<dbReference type="SMR" id="G1TN62"/>
<dbReference type="FunCoup" id="G1TN62">
    <property type="interactions" value="1347"/>
</dbReference>
<dbReference type="IntAct" id="G1TN62">
    <property type="interactions" value="1"/>
</dbReference>
<dbReference type="STRING" id="9986.ENSOCUP00000018431"/>
<dbReference type="PaxDb" id="9986-ENSOCUP00000018431"/>
<dbReference type="Ensembl" id="ENSOCUT00000023161.2">
    <property type="protein sequence ID" value="ENSOCUP00000018431.1"/>
    <property type="gene ID" value="ENSOCUG00000026336.2"/>
</dbReference>
<dbReference type="KEGG" id="ocu:100345774"/>
<dbReference type="eggNOG" id="KOG3411">
    <property type="taxonomic scope" value="Eukaryota"/>
</dbReference>
<dbReference type="GeneTree" id="ENSGT00390000013102"/>
<dbReference type="HOGENOM" id="CLU_108559_0_1_1"/>
<dbReference type="InParanoid" id="G1TN62"/>
<dbReference type="OMA" id="WAPFVKT"/>
<dbReference type="OrthoDB" id="428974at2759"/>
<dbReference type="TreeFam" id="TF315008"/>
<dbReference type="EvolutionaryTrace" id="G1TN62"/>
<dbReference type="Proteomes" id="UP000001811">
    <property type="component" value="Chromosome 14"/>
</dbReference>
<dbReference type="Bgee" id="ENSOCUG00000026336">
    <property type="expression patterns" value="Expressed in uterus and 15 other cell types or tissues"/>
</dbReference>
<dbReference type="GO" id="GO:0022626">
    <property type="term" value="C:cytosolic ribosome"/>
    <property type="evidence" value="ECO:0000314"/>
    <property type="project" value="UniProtKB"/>
</dbReference>
<dbReference type="GO" id="GO:0022627">
    <property type="term" value="C:cytosolic small ribosomal subunit"/>
    <property type="evidence" value="ECO:0007669"/>
    <property type="project" value="TreeGrafter"/>
</dbReference>
<dbReference type="GO" id="GO:0005730">
    <property type="term" value="C:nucleolus"/>
    <property type="evidence" value="ECO:0007669"/>
    <property type="project" value="UniProtKB-SubCell"/>
</dbReference>
<dbReference type="GO" id="GO:0003723">
    <property type="term" value="F:RNA binding"/>
    <property type="evidence" value="ECO:0007669"/>
    <property type="project" value="TreeGrafter"/>
</dbReference>
<dbReference type="GO" id="GO:0003735">
    <property type="term" value="F:structural constituent of ribosome"/>
    <property type="evidence" value="ECO:0000314"/>
    <property type="project" value="UniProtKB"/>
</dbReference>
<dbReference type="GO" id="GO:0000028">
    <property type="term" value="P:ribosomal small subunit assembly"/>
    <property type="evidence" value="ECO:0007669"/>
    <property type="project" value="TreeGrafter"/>
</dbReference>
<dbReference type="GO" id="GO:0006412">
    <property type="term" value="P:translation"/>
    <property type="evidence" value="ECO:0007669"/>
    <property type="project" value="InterPro"/>
</dbReference>
<dbReference type="FunFam" id="1.10.10.10:FF:000255">
    <property type="entry name" value="40S ribosomal protein S19"/>
    <property type="match status" value="1"/>
</dbReference>
<dbReference type="Gene3D" id="1.10.10.10">
    <property type="entry name" value="Winged helix-like DNA-binding domain superfamily/Winged helix DNA-binding domain"/>
    <property type="match status" value="1"/>
</dbReference>
<dbReference type="InterPro" id="IPR001266">
    <property type="entry name" value="Ribosomal_eS19"/>
</dbReference>
<dbReference type="InterPro" id="IPR018277">
    <property type="entry name" value="Ribosomal_eS19_CS"/>
</dbReference>
<dbReference type="InterPro" id="IPR036388">
    <property type="entry name" value="WH-like_DNA-bd_sf"/>
</dbReference>
<dbReference type="InterPro" id="IPR036390">
    <property type="entry name" value="WH_DNA-bd_sf"/>
</dbReference>
<dbReference type="PANTHER" id="PTHR11710">
    <property type="entry name" value="40S RIBOSOMAL PROTEIN S19"/>
    <property type="match status" value="1"/>
</dbReference>
<dbReference type="PANTHER" id="PTHR11710:SF0">
    <property type="entry name" value="40S RIBOSOMAL PROTEIN S19"/>
    <property type="match status" value="1"/>
</dbReference>
<dbReference type="Pfam" id="PF01090">
    <property type="entry name" value="Ribosomal_S19e"/>
    <property type="match status" value="1"/>
</dbReference>
<dbReference type="SMART" id="SM01413">
    <property type="entry name" value="Ribosomal_S19e"/>
    <property type="match status" value="1"/>
</dbReference>
<dbReference type="SUPFAM" id="SSF46785">
    <property type="entry name" value="Winged helix' DNA-binding domain"/>
    <property type="match status" value="1"/>
</dbReference>
<dbReference type="PROSITE" id="PS00628">
    <property type="entry name" value="RIBOSOMAL_S19E"/>
    <property type="match status" value="1"/>
</dbReference>